<comment type="function">
    <text evidence="3">The glycine cleavage system catalyzes the degradation of glycine.</text>
</comment>
<comment type="catalytic activity">
    <reaction evidence="3">
        <text>N(6)-[(R)-S(8)-aminomethyldihydrolipoyl]-L-lysyl-[protein] + (6S)-5,6,7,8-tetrahydrofolate = N(6)-[(R)-dihydrolipoyl]-L-lysyl-[protein] + (6R)-5,10-methylene-5,6,7,8-tetrahydrofolate + NH4(+)</text>
        <dbReference type="Rhea" id="RHEA:16945"/>
        <dbReference type="Rhea" id="RHEA-COMP:10475"/>
        <dbReference type="Rhea" id="RHEA-COMP:10492"/>
        <dbReference type="ChEBI" id="CHEBI:15636"/>
        <dbReference type="ChEBI" id="CHEBI:28938"/>
        <dbReference type="ChEBI" id="CHEBI:57453"/>
        <dbReference type="ChEBI" id="CHEBI:83100"/>
        <dbReference type="ChEBI" id="CHEBI:83143"/>
        <dbReference type="EC" id="2.1.2.10"/>
    </reaction>
</comment>
<comment type="subunit">
    <text evidence="3">The glycine cleavage system is composed of four proteins: P, T, L and H.</text>
</comment>
<comment type="subcellular location">
    <subcellularLocation>
        <location evidence="3">Mitochondrion</location>
    </subcellularLocation>
</comment>
<comment type="similarity">
    <text evidence="4">Belongs to the GcvT family.</text>
</comment>
<organism>
    <name type="scientific">Mus musculus</name>
    <name type="common">Mouse</name>
    <dbReference type="NCBI Taxonomy" id="10090"/>
    <lineage>
        <taxon>Eukaryota</taxon>
        <taxon>Metazoa</taxon>
        <taxon>Chordata</taxon>
        <taxon>Craniata</taxon>
        <taxon>Vertebrata</taxon>
        <taxon>Euteleostomi</taxon>
        <taxon>Mammalia</taxon>
        <taxon>Eutheria</taxon>
        <taxon>Euarchontoglires</taxon>
        <taxon>Glires</taxon>
        <taxon>Rodentia</taxon>
        <taxon>Myomorpha</taxon>
        <taxon>Muroidea</taxon>
        <taxon>Muridae</taxon>
        <taxon>Murinae</taxon>
        <taxon>Mus</taxon>
        <taxon>Mus</taxon>
    </lineage>
</organism>
<sequence length="403" mass="44009">MHRIVSVVAPLGFRLQAQPLVQSRPLSSVQDVLRRTPLYDFHLAHGGKMVAFAGWSLPVQYRDSHVDSHLHTRRHCSLFDVSHMLQTKIFGCDRVKLLESVVVGDIAELRPNQGTLSLFTNEAGGILDDLIVSNTSEGHLYVVSNAGCRDKDLALMQDKVKEFQNRGLDVGLEVVENALLALQGPTATQVLQAGVTDDMKKLPFMTSAVMEVFGVSGCRVTRCGYTGEDGVEISVPATGAVHLATTLLKNPEVKLAGLAARDSLRLEAGLCLYGNDIDEHTTPVEGSLSWTLGKRRRIAMDFPGAKIIVPQLKGEVQRRRVGLICEGAPVRAHSPILNTEGTVIGTVTSGCPSPSLKKNVAMGYVPFKYSRPGTQLLVEVRRKQQMTVVSKMPFVPTNYYTLK</sequence>
<feature type="transit peptide" description="Mitochondrion" evidence="1">
    <location>
        <begin position="1"/>
        <end position="28"/>
    </location>
</feature>
<feature type="chain" id="PRO_0000010756" description="Aminomethyltransferase, mitochondrial">
    <location>
        <begin position="29"/>
        <end position="403"/>
    </location>
</feature>
<feature type="binding site" evidence="3">
    <location>
        <position position="232"/>
    </location>
    <ligand>
        <name>substrate</name>
    </ligand>
</feature>
<feature type="binding site" evidence="3">
    <location>
        <position position="261"/>
    </location>
    <ligand>
        <name>substrate</name>
    </ligand>
</feature>
<feature type="binding site" evidence="3">
    <location>
        <position position="399"/>
    </location>
    <ligand>
        <name>substrate</name>
    </ligand>
</feature>
<feature type="modified residue" description="N6-succinyllysine" evidence="6">
    <location>
        <position position="368"/>
    </location>
</feature>
<accession>Q8CFA2</accession>
<dbReference type="EC" id="2.1.2.10" evidence="2 3"/>
<dbReference type="EMBL" id="AJ437692">
    <property type="protein sequence ID" value="CAD26917.1"/>
    <property type="molecule type" value="Genomic_DNA"/>
</dbReference>
<dbReference type="CCDS" id="CCDS23519.1"/>
<dbReference type="RefSeq" id="NP_001013836.1">
    <property type="nucleotide sequence ID" value="NM_001013814.2"/>
</dbReference>
<dbReference type="SMR" id="Q8CFA2"/>
<dbReference type="BioGRID" id="241804">
    <property type="interactions" value="4"/>
</dbReference>
<dbReference type="FunCoup" id="Q8CFA2">
    <property type="interactions" value="1229"/>
</dbReference>
<dbReference type="STRING" id="10090.ENSMUSP00000035230"/>
<dbReference type="iPTMnet" id="Q8CFA2"/>
<dbReference type="PhosphoSitePlus" id="Q8CFA2"/>
<dbReference type="SwissPalm" id="Q8CFA2"/>
<dbReference type="jPOST" id="Q8CFA2"/>
<dbReference type="PaxDb" id="10090-ENSMUSP00000035230"/>
<dbReference type="ProteomicsDB" id="267782"/>
<dbReference type="DNASU" id="434437"/>
<dbReference type="Ensembl" id="ENSMUST00000035230.7">
    <property type="protein sequence ID" value="ENSMUSP00000035230.6"/>
    <property type="gene ID" value="ENSMUSG00000032607.13"/>
</dbReference>
<dbReference type="GeneID" id="434437"/>
<dbReference type="KEGG" id="mmu:434437"/>
<dbReference type="UCSC" id="uc009rpc.1">
    <property type="organism name" value="mouse"/>
</dbReference>
<dbReference type="AGR" id="MGI:3646700"/>
<dbReference type="CTD" id="275"/>
<dbReference type="MGI" id="MGI:3646700">
    <property type="gene designation" value="Amt"/>
</dbReference>
<dbReference type="VEuPathDB" id="HostDB:ENSMUSG00000032607"/>
<dbReference type="eggNOG" id="KOG2770">
    <property type="taxonomic scope" value="Eukaryota"/>
</dbReference>
<dbReference type="GeneTree" id="ENSGT00940000157524"/>
<dbReference type="HOGENOM" id="CLU_007884_10_0_1"/>
<dbReference type="InParanoid" id="Q8CFA2"/>
<dbReference type="OMA" id="MPVQYPA"/>
<dbReference type="OrthoDB" id="10263536at2759"/>
<dbReference type="PhylomeDB" id="Q8CFA2"/>
<dbReference type="TreeFam" id="TF313026"/>
<dbReference type="Reactome" id="R-MMU-6783984">
    <property type="pathway name" value="Glycine degradation"/>
</dbReference>
<dbReference type="BioGRID-ORCS" id="434437">
    <property type="hits" value="1 hit in 77 CRISPR screens"/>
</dbReference>
<dbReference type="ChiTaRS" id="Amt">
    <property type="organism name" value="mouse"/>
</dbReference>
<dbReference type="PRO" id="PR:Q8CFA2"/>
<dbReference type="Proteomes" id="UP000000589">
    <property type="component" value="Chromosome 9"/>
</dbReference>
<dbReference type="RNAct" id="Q8CFA2">
    <property type="molecule type" value="protein"/>
</dbReference>
<dbReference type="Bgee" id="ENSMUSG00000032607">
    <property type="expression patterns" value="Expressed in yolk sac and 89 other cell types or tissues"/>
</dbReference>
<dbReference type="ExpressionAtlas" id="Q8CFA2">
    <property type="expression patterns" value="baseline and differential"/>
</dbReference>
<dbReference type="GO" id="GO:0005960">
    <property type="term" value="C:glycine cleavage complex"/>
    <property type="evidence" value="ECO:0007669"/>
    <property type="project" value="InterPro"/>
</dbReference>
<dbReference type="GO" id="GO:0005739">
    <property type="term" value="C:mitochondrion"/>
    <property type="evidence" value="ECO:0007005"/>
    <property type="project" value="MGI"/>
</dbReference>
<dbReference type="GO" id="GO:0005654">
    <property type="term" value="C:nucleoplasm"/>
    <property type="evidence" value="ECO:0007669"/>
    <property type="project" value="Ensembl"/>
</dbReference>
<dbReference type="GO" id="GO:0004047">
    <property type="term" value="F:aminomethyltransferase activity"/>
    <property type="evidence" value="ECO:0000250"/>
    <property type="project" value="UniProtKB"/>
</dbReference>
<dbReference type="GO" id="GO:0008483">
    <property type="term" value="F:transaminase activity"/>
    <property type="evidence" value="ECO:0007669"/>
    <property type="project" value="UniProtKB-KW"/>
</dbReference>
<dbReference type="GO" id="GO:0019464">
    <property type="term" value="P:glycine decarboxylation via glycine cleavage system"/>
    <property type="evidence" value="ECO:0000250"/>
    <property type="project" value="UniProtKB"/>
</dbReference>
<dbReference type="FunFam" id="2.40.30.110:FF:000002">
    <property type="entry name" value="Aminomethyltransferase"/>
    <property type="match status" value="1"/>
</dbReference>
<dbReference type="FunFam" id="3.30.1360.120:FF:000014">
    <property type="entry name" value="Aminomethyltransferase"/>
    <property type="match status" value="1"/>
</dbReference>
<dbReference type="FunFam" id="3.30.70.1400:FF:000001">
    <property type="entry name" value="Aminomethyltransferase"/>
    <property type="match status" value="1"/>
</dbReference>
<dbReference type="FunFam" id="4.10.1250.10:FF:000002">
    <property type="entry name" value="Aminomethyltransferase"/>
    <property type="match status" value="1"/>
</dbReference>
<dbReference type="Gene3D" id="2.40.30.110">
    <property type="entry name" value="Aminomethyltransferase beta-barrel domains"/>
    <property type="match status" value="1"/>
</dbReference>
<dbReference type="Gene3D" id="3.30.70.1400">
    <property type="entry name" value="Aminomethyltransferase beta-barrel domains"/>
    <property type="match status" value="1"/>
</dbReference>
<dbReference type="Gene3D" id="4.10.1250.10">
    <property type="entry name" value="Aminomethyltransferase fragment"/>
    <property type="match status" value="1"/>
</dbReference>
<dbReference type="Gene3D" id="3.30.1360.120">
    <property type="entry name" value="Probable tRNA modification gtpase trme, domain 1"/>
    <property type="match status" value="1"/>
</dbReference>
<dbReference type="InterPro" id="IPR006223">
    <property type="entry name" value="GCS_T"/>
</dbReference>
<dbReference type="InterPro" id="IPR013977">
    <property type="entry name" value="GCST_C"/>
</dbReference>
<dbReference type="InterPro" id="IPR006222">
    <property type="entry name" value="GCV_T_N"/>
</dbReference>
<dbReference type="InterPro" id="IPR028896">
    <property type="entry name" value="GcvT/YgfZ/DmdA"/>
</dbReference>
<dbReference type="InterPro" id="IPR029043">
    <property type="entry name" value="GcvT/YgfZ_C"/>
</dbReference>
<dbReference type="InterPro" id="IPR027266">
    <property type="entry name" value="TrmE/GcvT_dom1"/>
</dbReference>
<dbReference type="NCBIfam" id="TIGR00528">
    <property type="entry name" value="gcvT"/>
    <property type="match status" value="1"/>
</dbReference>
<dbReference type="NCBIfam" id="NF001567">
    <property type="entry name" value="PRK00389.1"/>
    <property type="match status" value="1"/>
</dbReference>
<dbReference type="PANTHER" id="PTHR43757">
    <property type="entry name" value="AMINOMETHYLTRANSFERASE"/>
    <property type="match status" value="1"/>
</dbReference>
<dbReference type="PANTHER" id="PTHR43757:SF16">
    <property type="entry name" value="AMINOMETHYLTRANSFERASE, MITOCHONDRIAL"/>
    <property type="match status" value="1"/>
</dbReference>
<dbReference type="Pfam" id="PF01571">
    <property type="entry name" value="GCV_T"/>
    <property type="match status" value="1"/>
</dbReference>
<dbReference type="Pfam" id="PF08669">
    <property type="entry name" value="GCV_T_C"/>
    <property type="match status" value="1"/>
</dbReference>
<dbReference type="PIRSF" id="PIRSF006487">
    <property type="entry name" value="GcvT"/>
    <property type="match status" value="1"/>
</dbReference>
<dbReference type="SUPFAM" id="SSF101790">
    <property type="entry name" value="Aminomethyltransferase beta-barrel domain"/>
    <property type="match status" value="1"/>
</dbReference>
<dbReference type="SUPFAM" id="SSF103025">
    <property type="entry name" value="Folate-binding domain"/>
    <property type="match status" value="1"/>
</dbReference>
<keyword id="KW-0032">Aminotransferase</keyword>
<keyword id="KW-0496">Mitochondrion</keyword>
<keyword id="KW-1185">Reference proteome</keyword>
<keyword id="KW-0808">Transferase</keyword>
<keyword id="KW-0809">Transit peptide</keyword>
<gene>
    <name evidence="5" type="primary">Amt</name>
</gene>
<proteinExistence type="evidence at protein level"/>
<reference key="1">
    <citation type="journal article" date="2002" name="DNA Seq.">
        <title>Genomic organization of the murine aminomethyltransferase gene (Amt).</title>
        <authorList>
            <person name="Backofen B."/>
            <person name="Leeb T."/>
        </authorList>
    </citation>
    <scope>NUCLEOTIDE SEQUENCE [GENOMIC DNA]</scope>
    <source>
        <strain>129S6/SvEvTac</strain>
    </source>
</reference>
<reference key="2">
    <citation type="journal article" date="2010" name="Cell">
        <title>A tissue-specific atlas of mouse protein phosphorylation and expression.</title>
        <authorList>
            <person name="Huttlin E.L."/>
            <person name="Jedrychowski M.P."/>
            <person name="Elias J.E."/>
            <person name="Goswami T."/>
            <person name="Rad R."/>
            <person name="Beausoleil S.A."/>
            <person name="Villen J."/>
            <person name="Haas W."/>
            <person name="Sowa M.E."/>
            <person name="Gygi S.P."/>
        </authorList>
    </citation>
    <scope>IDENTIFICATION BY MASS SPECTROMETRY [LARGE SCALE ANALYSIS]</scope>
    <source>
        <tissue>Brain</tissue>
        <tissue>Kidney</tissue>
        <tissue>Liver</tissue>
        <tissue>Pancreas</tissue>
    </source>
</reference>
<reference key="3">
    <citation type="journal article" date="2013" name="Mol. Cell">
        <title>SIRT5-mediated lysine desuccinylation impacts diverse metabolic pathways.</title>
        <authorList>
            <person name="Park J."/>
            <person name="Chen Y."/>
            <person name="Tishkoff D.X."/>
            <person name="Peng C."/>
            <person name="Tan M."/>
            <person name="Dai L."/>
            <person name="Xie Z."/>
            <person name="Zhang Y."/>
            <person name="Zwaans B.M."/>
            <person name="Skinner M.E."/>
            <person name="Lombard D.B."/>
            <person name="Zhao Y."/>
        </authorList>
    </citation>
    <scope>SUCCINYLATION [LARGE SCALE ANALYSIS] AT LYS-368</scope>
    <scope>IDENTIFICATION BY MASS SPECTROMETRY [LARGE SCALE ANALYSIS]</scope>
    <source>
        <tissue>Liver</tissue>
    </source>
</reference>
<protein>
    <recommendedName>
        <fullName evidence="4">Aminomethyltransferase, mitochondrial</fullName>
        <ecNumber evidence="2 3">2.1.2.10</ecNumber>
    </recommendedName>
    <alternativeName>
        <fullName evidence="3">Glycine cleavage system T protein</fullName>
        <shortName>GCVT</shortName>
    </alternativeName>
</protein>
<name>GCST_MOUSE</name>
<evidence type="ECO:0000250" key="1">
    <source>
        <dbReference type="UniProtKB" id="P25285"/>
    </source>
</evidence>
<evidence type="ECO:0000250" key="2">
    <source>
        <dbReference type="UniProtKB" id="P28337"/>
    </source>
</evidence>
<evidence type="ECO:0000250" key="3">
    <source>
        <dbReference type="UniProtKB" id="P48728"/>
    </source>
</evidence>
<evidence type="ECO:0000305" key="4"/>
<evidence type="ECO:0000312" key="5">
    <source>
        <dbReference type="MGI" id="MGI:3646700"/>
    </source>
</evidence>
<evidence type="ECO:0007744" key="6">
    <source>
    </source>
</evidence>